<reference key="1">
    <citation type="journal article" date="2008" name="J. Bacteriol.">
        <title>The pangenome structure of Escherichia coli: comparative genomic analysis of E. coli commensal and pathogenic isolates.</title>
        <authorList>
            <person name="Rasko D.A."/>
            <person name="Rosovitz M.J."/>
            <person name="Myers G.S.A."/>
            <person name="Mongodin E.F."/>
            <person name="Fricke W.F."/>
            <person name="Gajer P."/>
            <person name="Crabtree J."/>
            <person name="Sebaihia M."/>
            <person name="Thomson N.R."/>
            <person name="Chaudhuri R."/>
            <person name="Henderson I.R."/>
            <person name="Sperandio V."/>
            <person name="Ravel J."/>
        </authorList>
    </citation>
    <scope>NUCLEOTIDE SEQUENCE [LARGE SCALE GENOMIC DNA]</scope>
    <source>
        <strain>HS</strain>
    </source>
</reference>
<protein>
    <recommendedName>
        <fullName evidence="1">Potassium-transporting ATPase potassium-binding subunit</fullName>
    </recommendedName>
    <alternativeName>
        <fullName evidence="1">ATP phosphohydrolase [potassium-transporting] A chain</fullName>
    </alternativeName>
    <alternativeName>
        <fullName evidence="1">Potassium-binding and translocating subunit A</fullName>
    </alternativeName>
    <alternativeName>
        <fullName evidence="1">Potassium-translocating ATPase A chain</fullName>
    </alternativeName>
</protein>
<comment type="function">
    <text evidence="1">Part of the high-affinity ATP-driven potassium transport (or Kdp) system, which catalyzes the hydrolysis of ATP coupled with the electrogenic transport of potassium into the cytoplasm. This subunit binds the periplasmic potassium ions and delivers the ions to the membrane domain of KdpB through an intramembrane tunnel.</text>
</comment>
<comment type="subunit">
    <text evidence="1">The system is composed of three essential subunits: KdpA, KdpB and KdpC.</text>
</comment>
<comment type="subcellular location">
    <subcellularLocation>
        <location evidence="1">Cell inner membrane</location>
        <topology evidence="1">Multi-pass membrane protein</topology>
    </subcellularLocation>
</comment>
<comment type="similarity">
    <text evidence="1">Belongs to the KdpA family.</text>
</comment>
<organism>
    <name type="scientific">Escherichia coli O9:H4 (strain HS)</name>
    <dbReference type="NCBI Taxonomy" id="331112"/>
    <lineage>
        <taxon>Bacteria</taxon>
        <taxon>Pseudomonadati</taxon>
        <taxon>Pseudomonadota</taxon>
        <taxon>Gammaproteobacteria</taxon>
        <taxon>Enterobacterales</taxon>
        <taxon>Enterobacteriaceae</taxon>
        <taxon>Escherichia</taxon>
    </lineage>
</organism>
<sequence length="557" mass="59159">MAAQGFLLIATFLLVLMVLARPLGSGLARLINDIPLPGTTGVERVLFRALGVSDREMNWKQYLCAILGLNMLGLAVLFFMLLGQHYLPLNPQQLPGLSWDLALNTAVSFVTNTNWQSYSGETTLSYFSQMAGLTVQNFLSAASGIAVIFALIRAFTRQSMSTLGNAWVDLLRITLWVLVPVALLIALFFIQQGALQNFLPYQAVNTVEGAQQLLPMGPVASQEAIKMLGTNGGGFFNANSSHPFENPTALTNFVQMLAIFLIPTALCFAFGEVTGDRRQGRMLLWAMSVIFVICVGVVMWAEVQGNPHLLALGTDSSINMEGKESRFGVLVSSLFAVVTTAASCGAVIAMHDSFTALGGMVPMWLMQIGEVVFGGVGSGLYGMMLFVLLAVFIAGLMIGRTPEYLGKKIDVREMKLTALAILVTPTLVLMGAALAMMTDAGRSAMLNPGPHGFSEVLYAVSSAANNNGSAFAGLSANSPFWNCLLAFCMFVGRFGVIIPVMAIAGSLVSKKSQAASSGTLPTHGPLFVGLLIGTVLLVGALTFIPALALGPVAEYLS</sequence>
<feature type="chain" id="PRO_1000059210" description="Potassium-transporting ATPase potassium-binding subunit">
    <location>
        <begin position="1"/>
        <end position="557"/>
    </location>
</feature>
<feature type="transmembrane region" description="Helical" evidence="1">
    <location>
        <begin position="5"/>
        <end position="25"/>
    </location>
</feature>
<feature type="transmembrane region" description="Helical" evidence="1">
    <location>
        <begin position="63"/>
        <end position="83"/>
    </location>
</feature>
<feature type="transmembrane region" description="Helical" evidence="1">
    <location>
        <begin position="132"/>
        <end position="152"/>
    </location>
</feature>
<feature type="transmembrane region" description="Helical" evidence="1">
    <location>
        <begin position="170"/>
        <end position="190"/>
    </location>
</feature>
<feature type="transmembrane region" description="Helical" evidence="1">
    <location>
        <begin position="253"/>
        <end position="273"/>
    </location>
</feature>
<feature type="transmembrane region" description="Helical" evidence="1">
    <location>
        <begin position="283"/>
        <end position="303"/>
    </location>
</feature>
<feature type="transmembrane region" description="Helical" evidence="1">
    <location>
        <begin position="329"/>
        <end position="349"/>
    </location>
</feature>
<feature type="transmembrane region" description="Helical" evidence="1">
    <location>
        <begin position="356"/>
        <end position="376"/>
    </location>
</feature>
<feature type="transmembrane region" description="Helical" evidence="1">
    <location>
        <begin position="379"/>
        <end position="399"/>
    </location>
</feature>
<feature type="transmembrane region" description="Helical" evidence="1">
    <location>
        <begin position="416"/>
        <end position="436"/>
    </location>
</feature>
<feature type="transmembrane region" description="Helical" evidence="1">
    <location>
        <begin position="484"/>
        <end position="504"/>
    </location>
</feature>
<feature type="transmembrane region" description="Helical" evidence="1">
    <location>
        <begin position="526"/>
        <end position="546"/>
    </location>
</feature>
<keyword id="KW-0997">Cell inner membrane</keyword>
<keyword id="KW-1003">Cell membrane</keyword>
<keyword id="KW-0406">Ion transport</keyword>
<keyword id="KW-0472">Membrane</keyword>
<keyword id="KW-0630">Potassium</keyword>
<keyword id="KW-0633">Potassium transport</keyword>
<keyword id="KW-0812">Transmembrane</keyword>
<keyword id="KW-1133">Transmembrane helix</keyword>
<keyword id="KW-0813">Transport</keyword>
<gene>
    <name evidence="1" type="primary">kdpA</name>
    <name type="ordered locus">EcHS_A0745</name>
</gene>
<accession>A7ZXV9</accession>
<proteinExistence type="inferred from homology"/>
<dbReference type="EMBL" id="CP000802">
    <property type="protein sequence ID" value="ABV05113.1"/>
    <property type="molecule type" value="Genomic_DNA"/>
</dbReference>
<dbReference type="RefSeq" id="WP_000741131.1">
    <property type="nucleotide sequence ID" value="NC_009800.1"/>
</dbReference>
<dbReference type="SMR" id="A7ZXV9"/>
<dbReference type="KEGG" id="ecx:EcHS_A0745"/>
<dbReference type="HOGENOM" id="CLU_018614_3_0_6"/>
<dbReference type="GO" id="GO:0005886">
    <property type="term" value="C:plasma membrane"/>
    <property type="evidence" value="ECO:0007669"/>
    <property type="project" value="UniProtKB-SubCell"/>
</dbReference>
<dbReference type="GO" id="GO:0008556">
    <property type="term" value="F:P-type potassium transmembrane transporter activity"/>
    <property type="evidence" value="ECO:0007669"/>
    <property type="project" value="InterPro"/>
</dbReference>
<dbReference type="GO" id="GO:0030955">
    <property type="term" value="F:potassium ion binding"/>
    <property type="evidence" value="ECO:0007669"/>
    <property type="project" value="UniProtKB-UniRule"/>
</dbReference>
<dbReference type="HAMAP" id="MF_00275">
    <property type="entry name" value="KdpA"/>
    <property type="match status" value="1"/>
</dbReference>
<dbReference type="InterPro" id="IPR004623">
    <property type="entry name" value="KdpA"/>
</dbReference>
<dbReference type="NCBIfam" id="TIGR00680">
    <property type="entry name" value="kdpA"/>
    <property type="match status" value="1"/>
</dbReference>
<dbReference type="PANTHER" id="PTHR30607">
    <property type="entry name" value="POTASSIUM-TRANSPORTING ATPASE A CHAIN"/>
    <property type="match status" value="1"/>
</dbReference>
<dbReference type="PANTHER" id="PTHR30607:SF2">
    <property type="entry name" value="POTASSIUM-TRANSPORTING ATPASE POTASSIUM-BINDING SUBUNIT"/>
    <property type="match status" value="1"/>
</dbReference>
<dbReference type="Pfam" id="PF03814">
    <property type="entry name" value="KdpA"/>
    <property type="match status" value="1"/>
</dbReference>
<dbReference type="PIRSF" id="PIRSF001294">
    <property type="entry name" value="K_ATPaseA"/>
    <property type="match status" value="1"/>
</dbReference>
<evidence type="ECO:0000255" key="1">
    <source>
        <dbReference type="HAMAP-Rule" id="MF_00275"/>
    </source>
</evidence>
<name>KDPA_ECOHS</name>